<feature type="chain" id="PRO_0000337274" description="Plasma membrane fusion protein PRM1">
    <location>
        <begin position="1"/>
        <end position="623"/>
    </location>
</feature>
<feature type="topological domain" description="Extracellular" evidence="1">
    <location>
        <begin position="1"/>
        <end position="19"/>
    </location>
</feature>
<feature type="transmembrane region" description="Helical" evidence="2">
    <location>
        <begin position="20"/>
        <end position="40"/>
    </location>
</feature>
<feature type="topological domain" description="Cytoplasmic" evidence="1">
    <location>
        <begin position="41"/>
        <end position="92"/>
    </location>
</feature>
<feature type="transmembrane region" description="Helical" evidence="2">
    <location>
        <begin position="93"/>
        <end position="113"/>
    </location>
</feature>
<feature type="topological domain" description="Extracellular" evidence="1">
    <location>
        <begin position="114"/>
        <end position="281"/>
    </location>
</feature>
<feature type="transmembrane region" description="Helical" evidence="2">
    <location>
        <begin position="282"/>
        <end position="302"/>
    </location>
</feature>
<feature type="topological domain" description="Cytoplasmic" evidence="1">
    <location>
        <begin position="303"/>
        <end position="365"/>
    </location>
</feature>
<feature type="transmembrane region" description="Helical" evidence="2">
    <location>
        <begin position="366"/>
        <end position="386"/>
    </location>
</feature>
<feature type="topological domain" description="Extracellular" evidence="1">
    <location>
        <begin position="387"/>
        <end position="537"/>
    </location>
</feature>
<feature type="transmembrane region" description="Helical" evidence="2">
    <location>
        <begin position="538"/>
        <end position="558"/>
    </location>
</feature>
<feature type="topological domain" description="Cytoplasmic" evidence="1">
    <location>
        <begin position="559"/>
        <end position="623"/>
    </location>
</feature>
<feature type="glycosylation site" description="N-linked (GlcNAc...) asparagine" evidence="2">
    <location>
        <position position="132"/>
    </location>
</feature>
<feature type="glycosylation site" description="N-linked (GlcNAc...) asparagine" evidence="2">
    <location>
        <position position="182"/>
    </location>
</feature>
<feature type="glycosylation site" description="N-linked (GlcNAc...) asparagine" evidence="2">
    <location>
        <position position="207"/>
    </location>
</feature>
<feature type="glycosylation site" description="N-linked (GlcNAc...) asparagine" evidence="2">
    <location>
        <position position="218"/>
    </location>
</feature>
<feature type="glycosylation site" description="N-linked (GlcNAc...) asparagine" evidence="2">
    <location>
        <position position="243"/>
    </location>
</feature>
<feature type="glycosylation site" description="N-linked (GlcNAc...) asparagine" evidence="2">
    <location>
        <position position="403"/>
    </location>
</feature>
<feature type="glycosylation site" description="N-linked (GlcNAc...) asparagine" evidence="2">
    <location>
        <position position="444"/>
    </location>
</feature>
<feature type="glycosylation site" description="N-linked (GlcNAc...) asparagine" evidence="2">
    <location>
        <position position="455"/>
    </location>
</feature>
<sequence>MFRNYLNLPEILTQVYLNKYAILLILILIKLILLETSILDNLNSVLLDNSICDNGEIQPVLNTVHYMIVDSLQTLEAAGIVSIILTLKVIKQLALFFIELFFGTYICLLNAALKGSTEVALDASEGVIRAVNATVVSATNDIESALKGLSSIINDLVTGFNAIKNMFTGSKSDPTQYQNKINITLGDLKSKIMIPSEVLTKLDNFKNSSLYGLSQLGNGTQTIVSTPFELAIKKLNTMKSSYNFTTGAPSPINFREECLKDMSKLKDVQTDLAKLVEKISKWLFIGLVLAMVGSILYVSYIQWRHWRRMDKFISETGIDKEVQFRNQYNIYNNFLIYTIVKRMGIELNERTIWMLSFMFSKISRNVFFFGIMGVVSVVAQYILLNSVQSSMNNHIKSFDITSNSTSMSASTIYLRDMNTYIDDTQDKLNQELFSGIKEISVSLNSTIVEFLDKLNETLSDIFGSTPLAGPINTVVYCTIGRKLEKVEKGLTWMNDNLNINIPSISRDIEDGLSHMTFLQPQSVLARANKIIDLYRKSILLELYISLGLLGVWLFQIFVGSATLTIRYWNSTRQGNNSYAISSPHELSEQEKQVYGYPLSHPLIDGKDLTTSSSFYPTTEEKSK</sequence>
<accession>Q59W55</accession>
<accession>A0A1D8PF36</accession>
<reference key="1">
    <citation type="journal article" date="2004" name="Proc. Natl. Acad. Sci. U.S.A.">
        <title>The diploid genome sequence of Candida albicans.</title>
        <authorList>
            <person name="Jones T."/>
            <person name="Federspiel N.A."/>
            <person name="Chibana H."/>
            <person name="Dungan J."/>
            <person name="Kalman S."/>
            <person name="Magee B.B."/>
            <person name="Newport G."/>
            <person name="Thorstenson Y.R."/>
            <person name="Agabian N."/>
            <person name="Magee P.T."/>
            <person name="Davis R.W."/>
            <person name="Scherer S."/>
        </authorList>
    </citation>
    <scope>NUCLEOTIDE SEQUENCE [LARGE SCALE GENOMIC DNA]</scope>
    <source>
        <strain>SC5314 / ATCC MYA-2876</strain>
    </source>
</reference>
<reference key="2">
    <citation type="journal article" date="2007" name="Genome Biol.">
        <title>Assembly of the Candida albicans genome into sixteen supercontigs aligned on the eight chromosomes.</title>
        <authorList>
            <person name="van het Hoog M."/>
            <person name="Rast T.J."/>
            <person name="Martchenko M."/>
            <person name="Grindle S."/>
            <person name="Dignard D."/>
            <person name="Hogues H."/>
            <person name="Cuomo C."/>
            <person name="Berriman M."/>
            <person name="Scherer S."/>
            <person name="Magee B.B."/>
            <person name="Whiteway M."/>
            <person name="Chibana H."/>
            <person name="Nantel A."/>
            <person name="Magee P.T."/>
        </authorList>
    </citation>
    <scope>GENOME REANNOTATION</scope>
    <source>
        <strain>SC5314 / ATCC MYA-2876</strain>
    </source>
</reference>
<reference key="3">
    <citation type="journal article" date="2013" name="Genome Biol.">
        <title>Assembly of a phased diploid Candida albicans genome facilitates allele-specific measurements and provides a simple model for repeat and indel structure.</title>
        <authorList>
            <person name="Muzzey D."/>
            <person name="Schwartz K."/>
            <person name="Weissman J.S."/>
            <person name="Sherlock G."/>
        </authorList>
    </citation>
    <scope>NUCLEOTIDE SEQUENCE [LARGE SCALE GENOMIC DNA]</scope>
    <scope>GENOME REANNOTATION</scope>
    <source>
        <strain>SC5314 / ATCC MYA-2876</strain>
    </source>
</reference>
<reference key="4">
    <citation type="journal article" date="2005" name="Eukaryot. Cell">
        <title>Unique aspects of gene expression during Candida albicans mating and possible G(1) dependency.</title>
        <authorList>
            <person name="Zhao R."/>
            <person name="Daniels K.J."/>
            <person name="Lockhart S.R."/>
            <person name="Yeater K.M."/>
            <person name="Hoyer L.L."/>
            <person name="Soll D.R."/>
        </authorList>
    </citation>
    <scope>INDUCTION</scope>
</reference>
<reference key="5">
    <citation type="journal article" date="2006" name="Eukaryot. Cell">
        <title>SST2, a regulator of G-protein signaling for the Candida albicans mating response pathway.</title>
        <authorList>
            <person name="Dignard D."/>
            <person name="Whiteway M."/>
        </authorList>
    </citation>
    <scope>INDUCTION</scope>
</reference>
<reference key="6">
    <citation type="journal article" date="2006" name="Mol. Microbiol.">
        <title>The role of nutrient regulation and the Gpa2 protein in the mating pheromone response of C. albicans.</title>
        <authorList>
            <person name="Bennett R.J."/>
            <person name="Johnson A.D."/>
        </authorList>
    </citation>
    <scope>INDUCTION</scope>
</reference>
<name>PRM1_CANAL</name>
<proteinExistence type="evidence at transcript level"/>
<evidence type="ECO:0000250" key="1"/>
<evidence type="ECO:0000255" key="2"/>
<evidence type="ECO:0000269" key="3">
    <source>
    </source>
</evidence>
<evidence type="ECO:0000269" key="4">
    <source>
    </source>
</evidence>
<evidence type="ECO:0000269" key="5">
    <source>
    </source>
</evidence>
<evidence type="ECO:0000305" key="6"/>
<keyword id="KW-1003">Cell membrane</keyword>
<keyword id="KW-0184">Conjugation</keyword>
<keyword id="KW-0325">Glycoprotein</keyword>
<keyword id="KW-0472">Membrane</keyword>
<keyword id="KW-1185">Reference proteome</keyword>
<keyword id="KW-0812">Transmembrane</keyword>
<keyword id="KW-1133">Transmembrane helix</keyword>
<dbReference type="EMBL" id="CP017623">
    <property type="protein sequence ID" value="AOW26759.1"/>
    <property type="molecule type" value="Genomic_DNA"/>
</dbReference>
<dbReference type="RefSeq" id="XP_713802.2">
    <property type="nucleotide sequence ID" value="XM_708709.2"/>
</dbReference>
<dbReference type="FunCoup" id="Q59W55">
    <property type="interactions" value="42"/>
</dbReference>
<dbReference type="STRING" id="237561.Q59W55"/>
<dbReference type="GlyCosmos" id="Q59W55">
    <property type="glycosylation" value="8 sites, No reported glycans"/>
</dbReference>
<dbReference type="EnsemblFungi" id="C1_11340W_A-T">
    <property type="protein sequence ID" value="C1_11340W_A-T-p1"/>
    <property type="gene ID" value="C1_11340W_A"/>
</dbReference>
<dbReference type="GeneID" id="3644549"/>
<dbReference type="KEGG" id="cal:CAALFM_C111340WA"/>
<dbReference type="CGD" id="CAL0000179626">
    <property type="gene designation" value="PRM1"/>
</dbReference>
<dbReference type="VEuPathDB" id="FungiDB:C1_11340W_A"/>
<dbReference type="eggNOG" id="ENOG502QRP5">
    <property type="taxonomic scope" value="Eukaryota"/>
</dbReference>
<dbReference type="HOGENOM" id="CLU_010191_1_0_1"/>
<dbReference type="InParanoid" id="Q59W55"/>
<dbReference type="OrthoDB" id="5356111at2759"/>
<dbReference type="PRO" id="PR:Q59W55"/>
<dbReference type="Proteomes" id="UP000000559">
    <property type="component" value="Chromosome 1"/>
</dbReference>
<dbReference type="GO" id="GO:0043332">
    <property type="term" value="C:mating projection tip"/>
    <property type="evidence" value="ECO:0000318"/>
    <property type="project" value="GO_Central"/>
</dbReference>
<dbReference type="GO" id="GO:0005886">
    <property type="term" value="C:plasma membrane"/>
    <property type="evidence" value="ECO:0007669"/>
    <property type="project" value="UniProtKB-SubCell"/>
</dbReference>
<dbReference type="GO" id="GO:0032220">
    <property type="term" value="P:plasma membrane fusion involved in cytogamy"/>
    <property type="evidence" value="ECO:0000318"/>
    <property type="project" value="GO_Central"/>
</dbReference>
<dbReference type="InterPro" id="IPR026777">
    <property type="entry name" value="PRM1"/>
</dbReference>
<dbReference type="PANTHER" id="PTHR31030">
    <property type="entry name" value="PLASMA MEMBRANE FUSION PROTEIN PRM1"/>
    <property type="match status" value="1"/>
</dbReference>
<dbReference type="PANTHER" id="PTHR31030:SF1">
    <property type="entry name" value="PLASMA MEMBRANE FUSION PROTEIN PRM1"/>
    <property type="match status" value="1"/>
</dbReference>
<gene>
    <name type="primary">PRM1</name>
    <name type="ordered locus">CAALFM_C111340WA</name>
    <name type="ORF">CaO19.669</name>
    <name type="ORF">CaO19.8286</name>
</gene>
<organism>
    <name type="scientific">Candida albicans (strain SC5314 / ATCC MYA-2876)</name>
    <name type="common">Yeast</name>
    <dbReference type="NCBI Taxonomy" id="237561"/>
    <lineage>
        <taxon>Eukaryota</taxon>
        <taxon>Fungi</taxon>
        <taxon>Dikarya</taxon>
        <taxon>Ascomycota</taxon>
        <taxon>Saccharomycotina</taxon>
        <taxon>Pichiomycetes</taxon>
        <taxon>Debaryomycetaceae</taxon>
        <taxon>Candida/Lodderomyces clade</taxon>
        <taxon>Candida</taxon>
    </lineage>
</organism>
<comment type="function">
    <text evidence="1">Involved in cell fusion during mating by stabilizing the plasma membrane fusion event.</text>
</comment>
<comment type="subcellular location">
    <subcellularLocation>
        <location evidence="1">Cell membrane</location>
        <topology evidence="1">Multi-pass membrane protein</topology>
    </subcellularLocation>
</comment>
<comment type="induction">
    <text evidence="3 4 5">By pheromones during mating.</text>
</comment>
<comment type="similarity">
    <text evidence="6">Belongs to the PRM1 family.</text>
</comment>
<protein>
    <recommendedName>
        <fullName>Plasma membrane fusion protein PRM1</fullName>
    </recommendedName>
</protein>